<dbReference type="EC" id="2.4.2.7" evidence="1"/>
<dbReference type="EMBL" id="AL646052">
    <property type="protein sequence ID" value="CAD13945.1"/>
    <property type="status" value="ALT_INIT"/>
    <property type="molecule type" value="Genomic_DNA"/>
</dbReference>
<dbReference type="RefSeq" id="WP_043876535.1">
    <property type="nucleotide sequence ID" value="NC_003295.1"/>
</dbReference>
<dbReference type="SMR" id="Q8Y2B9"/>
<dbReference type="STRING" id="267608.RSc0417"/>
<dbReference type="EnsemblBacteria" id="CAD13945">
    <property type="protein sequence ID" value="CAD13945"/>
    <property type="gene ID" value="RSc0417"/>
</dbReference>
<dbReference type="KEGG" id="rso:RSc0417"/>
<dbReference type="eggNOG" id="COG0503">
    <property type="taxonomic scope" value="Bacteria"/>
</dbReference>
<dbReference type="HOGENOM" id="CLU_063339_3_0_4"/>
<dbReference type="UniPathway" id="UPA00588">
    <property type="reaction ID" value="UER00646"/>
</dbReference>
<dbReference type="Proteomes" id="UP000001436">
    <property type="component" value="Chromosome"/>
</dbReference>
<dbReference type="GO" id="GO:0005737">
    <property type="term" value="C:cytoplasm"/>
    <property type="evidence" value="ECO:0007669"/>
    <property type="project" value="UniProtKB-SubCell"/>
</dbReference>
<dbReference type="GO" id="GO:0003999">
    <property type="term" value="F:adenine phosphoribosyltransferase activity"/>
    <property type="evidence" value="ECO:0007669"/>
    <property type="project" value="UniProtKB-UniRule"/>
</dbReference>
<dbReference type="GO" id="GO:0006168">
    <property type="term" value="P:adenine salvage"/>
    <property type="evidence" value="ECO:0007669"/>
    <property type="project" value="InterPro"/>
</dbReference>
<dbReference type="GO" id="GO:0044209">
    <property type="term" value="P:AMP salvage"/>
    <property type="evidence" value="ECO:0007669"/>
    <property type="project" value="UniProtKB-UniRule"/>
</dbReference>
<dbReference type="GO" id="GO:0006166">
    <property type="term" value="P:purine ribonucleoside salvage"/>
    <property type="evidence" value="ECO:0007669"/>
    <property type="project" value="UniProtKB-KW"/>
</dbReference>
<dbReference type="CDD" id="cd06223">
    <property type="entry name" value="PRTases_typeI"/>
    <property type="match status" value="1"/>
</dbReference>
<dbReference type="FunFam" id="3.40.50.2020:FF:000021">
    <property type="entry name" value="Adenine phosphoribosyltransferase"/>
    <property type="match status" value="1"/>
</dbReference>
<dbReference type="Gene3D" id="3.40.50.2020">
    <property type="match status" value="1"/>
</dbReference>
<dbReference type="HAMAP" id="MF_00004">
    <property type="entry name" value="Aden_phosphoribosyltr"/>
    <property type="match status" value="1"/>
</dbReference>
<dbReference type="InterPro" id="IPR005764">
    <property type="entry name" value="Ade_phspho_trans"/>
</dbReference>
<dbReference type="InterPro" id="IPR050120">
    <property type="entry name" value="Adenine_PRTase"/>
</dbReference>
<dbReference type="InterPro" id="IPR000836">
    <property type="entry name" value="PRibTrfase_dom"/>
</dbReference>
<dbReference type="InterPro" id="IPR029057">
    <property type="entry name" value="PRTase-like"/>
</dbReference>
<dbReference type="NCBIfam" id="TIGR01090">
    <property type="entry name" value="apt"/>
    <property type="match status" value="1"/>
</dbReference>
<dbReference type="NCBIfam" id="NF002634">
    <property type="entry name" value="PRK02304.1-3"/>
    <property type="match status" value="1"/>
</dbReference>
<dbReference type="NCBIfam" id="NF002636">
    <property type="entry name" value="PRK02304.1-5"/>
    <property type="match status" value="1"/>
</dbReference>
<dbReference type="PANTHER" id="PTHR11776">
    <property type="entry name" value="ADENINE PHOSPHORIBOSYLTRANSFERASE"/>
    <property type="match status" value="1"/>
</dbReference>
<dbReference type="PANTHER" id="PTHR11776:SF7">
    <property type="entry name" value="PHOSPHORIBOSYLTRANSFERASE DOMAIN-CONTAINING PROTEIN"/>
    <property type="match status" value="1"/>
</dbReference>
<dbReference type="Pfam" id="PF00156">
    <property type="entry name" value="Pribosyltran"/>
    <property type="match status" value="1"/>
</dbReference>
<dbReference type="SUPFAM" id="SSF53271">
    <property type="entry name" value="PRTase-like"/>
    <property type="match status" value="1"/>
</dbReference>
<dbReference type="PROSITE" id="PS00103">
    <property type="entry name" value="PUR_PYR_PR_TRANSFER"/>
    <property type="match status" value="1"/>
</dbReference>
<keyword id="KW-0963">Cytoplasm</keyword>
<keyword id="KW-0328">Glycosyltransferase</keyword>
<keyword id="KW-0660">Purine salvage</keyword>
<keyword id="KW-1185">Reference proteome</keyword>
<keyword id="KW-0808">Transferase</keyword>
<organism>
    <name type="scientific">Ralstonia nicotianae (strain ATCC BAA-1114 / GMI1000)</name>
    <name type="common">Ralstonia solanacearum</name>
    <dbReference type="NCBI Taxonomy" id="267608"/>
    <lineage>
        <taxon>Bacteria</taxon>
        <taxon>Pseudomonadati</taxon>
        <taxon>Pseudomonadota</taxon>
        <taxon>Betaproteobacteria</taxon>
        <taxon>Burkholderiales</taxon>
        <taxon>Burkholderiaceae</taxon>
        <taxon>Ralstonia</taxon>
        <taxon>Ralstonia solanacearum species complex</taxon>
    </lineage>
</organism>
<evidence type="ECO:0000255" key="1">
    <source>
        <dbReference type="HAMAP-Rule" id="MF_00004"/>
    </source>
</evidence>
<evidence type="ECO:0000305" key="2"/>
<proteinExistence type="inferred from homology"/>
<gene>
    <name evidence="1" type="primary">apt</name>
    <name type="ordered locus">RSc0417</name>
    <name type="ORF">RS03385</name>
</gene>
<name>APT_RALN1</name>
<accession>Q8Y2B9</accession>
<sequence>MTDASISPSSPVPASTELGDVTRYLRERIRTVPDWPQLGVMFRDITPLLQDPKSLRVLVDVFVHRYMGQGLNLVAGIDARGFILGSIVAYELNLGFVPIRKKGKLPFTTVAEEYMLEYGSATVEIHADACKPGDRVLLIDDLIATGGTMMAGKRLLERLGATVVEGAAIVDLPELGGSRLLMDGGLPLFTVCRFDGH</sequence>
<comment type="function">
    <text evidence="1">Catalyzes a salvage reaction resulting in the formation of AMP, that is energically less costly than de novo synthesis.</text>
</comment>
<comment type="catalytic activity">
    <reaction evidence="1">
        <text>AMP + diphosphate = 5-phospho-alpha-D-ribose 1-diphosphate + adenine</text>
        <dbReference type="Rhea" id="RHEA:16609"/>
        <dbReference type="ChEBI" id="CHEBI:16708"/>
        <dbReference type="ChEBI" id="CHEBI:33019"/>
        <dbReference type="ChEBI" id="CHEBI:58017"/>
        <dbReference type="ChEBI" id="CHEBI:456215"/>
        <dbReference type="EC" id="2.4.2.7"/>
    </reaction>
</comment>
<comment type="pathway">
    <text evidence="1">Purine metabolism; AMP biosynthesis via salvage pathway; AMP from adenine: step 1/1.</text>
</comment>
<comment type="subunit">
    <text evidence="1">Homodimer.</text>
</comment>
<comment type="subcellular location">
    <subcellularLocation>
        <location evidence="1">Cytoplasm</location>
    </subcellularLocation>
</comment>
<comment type="similarity">
    <text evidence="1">Belongs to the purine/pyrimidine phosphoribosyltransferase family.</text>
</comment>
<comment type="sequence caution" evidence="2">
    <conflict type="erroneous initiation">
        <sequence resource="EMBL-CDS" id="CAD13945"/>
    </conflict>
</comment>
<protein>
    <recommendedName>
        <fullName evidence="1">Adenine phosphoribosyltransferase</fullName>
        <shortName evidence="1">APRT</shortName>
        <ecNumber evidence="1">2.4.2.7</ecNumber>
    </recommendedName>
</protein>
<reference key="1">
    <citation type="journal article" date="2002" name="Nature">
        <title>Genome sequence of the plant pathogen Ralstonia solanacearum.</title>
        <authorList>
            <person name="Salanoubat M."/>
            <person name="Genin S."/>
            <person name="Artiguenave F."/>
            <person name="Gouzy J."/>
            <person name="Mangenot S."/>
            <person name="Arlat M."/>
            <person name="Billault A."/>
            <person name="Brottier P."/>
            <person name="Camus J.-C."/>
            <person name="Cattolico L."/>
            <person name="Chandler M."/>
            <person name="Choisne N."/>
            <person name="Claudel-Renard C."/>
            <person name="Cunnac S."/>
            <person name="Demange N."/>
            <person name="Gaspin C."/>
            <person name="Lavie M."/>
            <person name="Moisan A."/>
            <person name="Robert C."/>
            <person name="Saurin W."/>
            <person name="Schiex T."/>
            <person name="Siguier P."/>
            <person name="Thebault P."/>
            <person name="Whalen M."/>
            <person name="Wincker P."/>
            <person name="Levy M."/>
            <person name="Weissenbach J."/>
            <person name="Boucher C.A."/>
        </authorList>
    </citation>
    <scope>NUCLEOTIDE SEQUENCE [LARGE SCALE GENOMIC DNA]</scope>
    <source>
        <strain>ATCC BAA-1114 / GMI1000</strain>
    </source>
</reference>
<feature type="chain" id="PRO_0000149437" description="Adenine phosphoribosyltransferase">
    <location>
        <begin position="1"/>
        <end position="197"/>
    </location>
</feature>